<accession>Q9ZE46</accession>
<proteinExistence type="inferred from homology"/>
<keyword id="KW-0131">Cell cycle</keyword>
<keyword id="KW-0132">Cell division</keyword>
<keyword id="KW-0342">GTP-binding</keyword>
<keyword id="KW-0460">Magnesium</keyword>
<keyword id="KW-0479">Metal-binding</keyword>
<keyword id="KW-0547">Nucleotide-binding</keyword>
<keyword id="KW-1185">Reference proteome</keyword>
<keyword id="KW-0717">Septation</keyword>
<protein>
    <recommendedName>
        <fullName evidence="1">Probable GTP-binding protein EngB</fullName>
    </recommendedName>
</protein>
<reference key="1">
    <citation type="journal article" date="1998" name="Nature">
        <title>The genome sequence of Rickettsia prowazekii and the origin of mitochondria.</title>
        <authorList>
            <person name="Andersson S.G.E."/>
            <person name="Zomorodipour A."/>
            <person name="Andersson J.O."/>
            <person name="Sicheritz-Ponten T."/>
            <person name="Alsmark U.C.M."/>
            <person name="Podowski R.M."/>
            <person name="Naeslund A.K."/>
            <person name="Eriksson A.-S."/>
            <person name="Winkler H.H."/>
            <person name="Kurland C.G."/>
        </authorList>
    </citation>
    <scope>NUCLEOTIDE SEQUENCE [LARGE SCALE GENOMIC DNA]</scope>
    <source>
        <strain>Madrid E</strain>
    </source>
</reference>
<gene>
    <name evidence="1" type="primary">engB</name>
    <name type="ordered locus">RP102</name>
</gene>
<feature type="chain" id="PRO_0000157777" description="Probable GTP-binding protein EngB">
    <location>
        <begin position="1"/>
        <end position="214"/>
    </location>
</feature>
<feature type="domain" description="EngB-type G" evidence="1">
    <location>
        <begin position="40"/>
        <end position="212"/>
    </location>
</feature>
<feature type="binding site" evidence="1">
    <location>
        <begin position="48"/>
        <end position="55"/>
    </location>
    <ligand>
        <name>GTP</name>
        <dbReference type="ChEBI" id="CHEBI:37565"/>
    </ligand>
</feature>
<feature type="binding site" evidence="1">
    <location>
        <position position="55"/>
    </location>
    <ligand>
        <name>Mg(2+)</name>
        <dbReference type="ChEBI" id="CHEBI:18420"/>
    </ligand>
</feature>
<feature type="binding site" evidence="1">
    <location>
        <begin position="75"/>
        <end position="79"/>
    </location>
    <ligand>
        <name>GTP</name>
        <dbReference type="ChEBI" id="CHEBI:37565"/>
    </ligand>
</feature>
<feature type="binding site" evidence="1">
    <location>
        <position position="77"/>
    </location>
    <ligand>
        <name>Mg(2+)</name>
        <dbReference type="ChEBI" id="CHEBI:18420"/>
    </ligand>
</feature>
<feature type="binding site" evidence="1">
    <location>
        <begin position="93"/>
        <end position="96"/>
    </location>
    <ligand>
        <name>GTP</name>
        <dbReference type="ChEBI" id="CHEBI:37565"/>
    </ligand>
</feature>
<feature type="binding site" evidence="1">
    <location>
        <begin position="160"/>
        <end position="163"/>
    </location>
    <ligand>
        <name>GTP</name>
        <dbReference type="ChEBI" id="CHEBI:37565"/>
    </ligand>
</feature>
<feature type="binding site" evidence="1">
    <location>
        <begin position="191"/>
        <end position="193"/>
    </location>
    <ligand>
        <name>GTP</name>
        <dbReference type="ChEBI" id="CHEBI:37565"/>
    </ligand>
</feature>
<evidence type="ECO:0000255" key="1">
    <source>
        <dbReference type="HAMAP-Rule" id="MF_00321"/>
    </source>
</evidence>
<name>ENGB_RICPR</name>
<sequence>MINNGKALNNKKSIDYSKLFRHQAKFVAGAIHINQIPDFSLPEIVFVGKSNVGKSSIINTICNNKSLAKVSNTPGRTRQINFFNIVDKLIIVDLPGYGFANVPISVKEQWEGLITYYLRNSHNLMLVNLLIDSRRGIKENDKKVAELLLANKREFQIIFTKSDKVTDRENLNYEAQNFLATLNYLCNVIYVSSRNKEGMRELKASFAQCIKHQR</sequence>
<comment type="function">
    <text evidence="1">Necessary for normal cell division and for the maintenance of normal septation.</text>
</comment>
<comment type="cofactor">
    <cofactor evidence="1">
        <name>Mg(2+)</name>
        <dbReference type="ChEBI" id="CHEBI:18420"/>
    </cofactor>
</comment>
<comment type="similarity">
    <text evidence="1">Belongs to the TRAFAC class TrmE-Era-EngA-EngB-Septin-like GTPase superfamily. EngB GTPase family.</text>
</comment>
<organism>
    <name type="scientific">Rickettsia prowazekii (strain Madrid E)</name>
    <dbReference type="NCBI Taxonomy" id="272947"/>
    <lineage>
        <taxon>Bacteria</taxon>
        <taxon>Pseudomonadati</taxon>
        <taxon>Pseudomonadota</taxon>
        <taxon>Alphaproteobacteria</taxon>
        <taxon>Rickettsiales</taxon>
        <taxon>Rickettsiaceae</taxon>
        <taxon>Rickettsieae</taxon>
        <taxon>Rickettsia</taxon>
        <taxon>typhus group</taxon>
    </lineage>
</organism>
<dbReference type="EMBL" id="AJ235270">
    <property type="protein sequence ID" value="CAA14571.1"/>
    <property type="molecule type" value="Genomic_DNA"/>
</dbReference>
<dbReference type="PIR" id="D71719">
    <property type="entry name" value="D71719"/>
</dbReference>
<dbReference type="RefSeq" id="NP_220494.1">
    <property type="nucleotide sequence ID" value="NC_000963.1"/>
</dbReference>
<dbReference type="SMR" id="Q9ZE46"/>
<dbReference type="STRING" id="272947.gene:17555185"/>
<dbReference type="EnsemblBacteria" id="CAA14571">
    <property type="protein sequence ID" value="CAA14571"/>
    <property type="gene ID" value="CAA14571"/>
</dbReference>
<dbReference type="KEGG" id="rpr:RP102"/>
<dbReference type="PATRIC" id="fig|272947.5.peg.101"/>
<dbReference type="eggNOG" id="COG0218">
    <property type="taxonomic scope" value="Bacteria"/>
</dbReference>
<dbReference type="HOGENOM" id="CLU_033732_2_0_5"/>
<dbReference type="OrthoDB" id="9804921at2"/>
<dbReference type="Proteomes" id="UP000002480">
    <property type="component" value="Chromosome"/>
</dbReference>
<dbReference type="GO" id="GO:0005525">
    <property type="term" value="F:GTP binding"/>
    <property type="evidence" value="ECO:0007669"/>
    <property type="project" value="UniProtKB-UniRule"/>
</dbReference>
<dbReference type="GO" id="GO:0046872">
    <property type="term" value="F:metal ion binding"/>
    <property type="evidence" value="ECO:0007669"/>
    <property type="project" value="UniProtKB-KW"/>
</dbReference>
<dbReference type="GO" id="GO:0000917">
    <property type="term" value="P:division septum assembly"/>
    <property type="evidence" value="ECO:0007669"/>
    <property type="project" value="UniProtKB-KW"/>
</dbReference>
<dbReference type="CDD" id="cd01876">
    <property type="entry name" value="YihA_EngB"/>
    <property type="match status" value="1"/>
</dbReference>
<dbReference type="Gene3D" id="3.40.50.300">
    <property type="entry name" value="P-loop containing nucleotide triphosphate hydrolases"/>
    <property type="match status" value="1"/>
</dbReference>
<dbReference type="HAMAP" id="MF_00321">
    <property type="entry name" value="GTPase_EngB"/>
    <property type="match status" value="1"/>
</dbReference>
<dbReference type="InterPro" id="IPR030393">
    <property type="entry name" value="G_ENGB_dom"/>
</dbReference>
<dbReference type="InterPro" id="IPR006073">
    <property type="entry name" value="GTP-bd"/>
</dbReference>
<dbReference type="InterPro" id="IPR019987">
    <property type="entry name" value="GTP-bd_ribosome_bio_YsxC"/>
</dbReference>
<dbReference type="InterPro" id="IPR027417">
    <property type="entry name" value="P-loop_NTPase"/>
</dbReference>
<dbReference type="NCBIfam" id="TIGR03598">
    <property type="entry name" value="GTPase_YsxC"/>
    <property type="match status" value="1"/>
</dbReference>
<dbReference type="PANTHER" id="PTHR11649:SF13">
    <property type="entry name" value="ENGB-TYPE G DOMAIN-CONTAINING PROTEIN"/>
    <property type="match status" value="1"/>
</dbReference>
<dbReference type="PANTHER" id="PTHR11649">
    <property type="entry name" value="MSS1/TRME-RELATED GTP-BINDING PROTEIN"/>
    <property type="match status" value="1"/>
</dbReference>
<dbReference type="Pfam" id="PF01926">
    <property type="entry name" value="MMR_HSR1"/>
    <property type="match status" value="1"/>
</dbReference>
<dbReference type="SUPFAM" id="SSF52540">
    <property type="entry name" value="P-loop containing nucleoside triphosphate hydrolases"/>
    <property type="match status" value="1"/>
</dbReference>
<dbReference type="PROSITE" id="PS51706">
    <property type="entry name" value="G_ENGB"/>
    <property type="match status" value="1"/>
</dbReference>